<protein>
    <recommendedName>
        <fullName evidence="1">Glycine cleavage system H protein</fullName>
    </recommendedName>
</protein>
<evidence type="ECO:0000255" key="1">
    <source>
        <dbReference type="HAMAP-Rule" id="MF_00272"/>
    </source>
</evidence>
<evidence type="ECO:0000255" key="2">
    <source>
        <dbReference type="PROSITE-ProRule" id="PRU01066"/>
    </source>
</evidence>
<name>GCSH_SALEP</name>
<proteinExistence type="inferred from homology"/>
<feature type="chain" id="PRO_1000114545" description="Glycine cleavage system H protein">
    <location>
        <begin position="1"/>
        <end position="129"/>
    </location>
</feature>
<feature type="domain" description="Lipoyl-binding" evidence="2">
    <location>
        <begin position="24"/>
        <end position="106"/>
    </location>
</feature>
<feature type="modified residue" description="N6-lipoyllysine" evidence="1">
    <location>
        <position position="65"/>
    </location>
</feature>
<comment type="function">
    <text evidence="1">The glycine cleavage system catalyzes the degradation of glycine. The H protein shuttles the methylamine group of glycine from the P protein to the T protein.</text>
</comment>
<comment type="cofactor">
    <cofactor evidence="1">
        <name>(R)-lipoate</name>
        <dbReference type="ChEBI" id="CHEBI:83088"/>
    </cofactor>
    <text evidence="1">Binds 1 lipoyl cofactor covalently.</text>
</comment>
<comment type="subunit">
    <text evidence="1">The glycine cleavage system is composed of four proteins: P, T, L and H.</text>
</comment>
<comment type="similarity">
    <text evidence="1">Belongs to the GcvH family.</text>
</comment>
<reference key="1">
    <citation type="journal article" date="2008" name="Genome Res.">
        <title>Comparative genome analysis of Salmonella enteritidis PT4 and Salmonella gallinarum 287/91 provides insights into evolutionary and host adaptation pathways.</title>
        <authorList>
            <person name="Thomson N.R."/>
            <person name="Clayton D.J."/>
            <person name="Windhorst D."/>
            <person name="Vernikos G."/>
            <person name="Davidson S."/>
            <person name="Churcher C."/>
            <person name="Quail M.A."/>
            <person name="Stevens M."/>
            <person name="Jones M.A."/>
            <person name="Watson M."/>
            <person name="Barron A."/>
            <person name="Layton A."/>
            <person name="Pickard D."/>
            <person name="Kingsley R.A."/>
            <person name="Bignell A."/>
            <person name="Clark L."/>
            <person name="Harris B."/>
            <person name="Ormond D."/>
            <person name="Abdellah Z."/>
            <person name="Brooks K."/>
            <person name="Cherevach I."/>
            <person name="Chillingworth T."/>
            <person name="Woodward J."/>
            <person name="Norberczak H."/>
            <person name="Lord A."/>
            <person name="Arrowsmith C."/>
            <person name="Jagels K."/>
            <person name="Moule S."/>
            <person name="Mungall K."/>
            <person name="Saunders M."/>
            <person name="Whitehead S."/>
            <person name="Chabalgoity J.A."/>
            <person name="Maskell D."/>
            <person name="Humphreys T."/>
            <person name="Roberts M."/>
            <person name="Barrow P.A."/>
            <person name="Dougan G."/>
            <person name="Parkhill J."/>
        </authorList>
    </citation>
    <scope>NUCLEOTIDE SEQUENCE [LARGE SCALE GENOMIC DNA]</scope>
    <source>
        <strain>P125109</strain>
    </source>
</reference>
<dbReference type="EMBL" id="AM933172">
    <property type="protein sequence ID" value="CAR34475.1"/>
    <property type="molecule type" value="Genomic_DNA"/>
</dbReference>
<dbReference type="RefSeq" id="WP_001295377.1">
    <property type="nucleotide sequence ID" value="NC_011294.1"/>
</dbReference>
<dbReference type="SMR" id="B5QXI1"/>
<dbReference type="GeneID" id="93779098"/>
<dbReference type="KEGG" id="set:SEN2897"/>
<dbReference type="HOGENOM" id="CLU_097408_2_1_6"/>
<dbReference type="Proteomes" id="UP000000613">
    <property type="component" value="Chromosome"/>
</dbReference>
<dbReference type="GO" id="GO:0005829">
    <property type="term" value="C:cytosol"/>
    <property type="evidence" value="ECO:0007669"/>
    <property type="project" value="TreeGrafter"/>
</dbReference>
<dbReference type="GO" id="GO:0005960">
    <property type="term" value="C:glycine cleavage complex"/>
    <property type="evidence" value="ECO:0007669"/>
    <property type="project" value="InterPro"/>
</dbReference>
<dbReference type="GO" id="GO:0019464">
    <property type="term" value="P:glycine decarboxylation via glycine cleavage system"/>
    <property type="evidence" value="ECO:0007669"/>
    <property type="project" value="UniProtKB-UniRule"/>
</dbReference>
<dbReference type="CDD" id="cd06848">
    <property type="entry name" value="GCS_H"/>
    <property type="match status" value="1"/>
</dbReference>
<dbReference type="FunFam" id="2.40.50.100:FF:000011">
    <property type="entry name" value="Glycine cleavage system H protein"/>
    <property type="match status" value="1"/>
</dbReference>
<dbReference type="Gene3D" id="2.40.50.100">
    <property type="match status" value="1"/>
</dbReference>
<dbReference type="HAMAP" id="MF_00272">
    <property type="entry name" value="GcvH"/>
    <property type="match status" value="1"/>
</dbReference>
<dbReference type="InterPro" id="IPR003016">
    <property type="entry name" value="2-oxoA_DH_lipoyl-BS"/>
</dbReference>
<dbReference type="InterPro" id="IPR000089">
    <property type="entry name" value="Biotin_lipoyl"/>
</dbReference>
<dbReference type="InterPro" id="IPR002930">
    <property type="entry name" value="GCV_H"/>
</dbReference>
<dbReference type="InterPro" id="IPR033753">
    <property type="entry name" value="GCV_H/Fam206"/>
</dbReference>
<dbReference type="InterPro" id="IPR017453">
    <property type="entry name" value="GCV_H_sub"/>
</dbReference>
<dbReference type="InterPro" id="IPR011053">
    <property type="entry name" value="Single_hybrid_motif"/>
</dbReference>
<dbReference type="NCBIfam" id="TIGR00527">
    <property type="entry name" value="gcvH"/>
    <property type="match status" value="1"/>
</dbReference>
<dbReference type="NCBIfam" id="NF002270">
    <property type="entry name" value="PRK01202.1"/>
    <property type="match status" value="1"/>
</dbReference>
<dbReference type="PANTHER" id="PTHR11715">
    <property type="entry name" value="GLYCINE CLEAVAGE SYSTEM H PROTEIN"/>
    <property type="match status" value="1"/>
</dbReference>
<dbReference type="PANTHER" id="PTHR11715:SF3">
    <property type="entry name" value="GLYCINE CLEAVAGE SYSTEM H PROTEIN-RELATED"/>
    <property type="match status" value="1"/>
</dbReference>
<dbReference type="Pfam" id="PF01597">
    <property type="entry name" value="GCV_H"/>
    <property type="match status" value="1"/>
</dbReference>
<dbReference type="SUPFAM" id="SSF51230">
    <property type="entry name" value="Single hybrid motif"/>
    <property type="match status" value="1"/>
</dbReference>
<dbReference type="PROSITE" id="PS50968">
    <property type="entry name" value="BIOTINYL_LIPOYL"/>
    <property type="match status" value="1"/>
</dbReference>
<dbReference type="PROSITE" id="PS00189">
    <property type="entry name" value="LIPOYL"/>
    <property type="match status" value="1"/>
</dbReference>
<organism>
    <name type="scientific">Salmonella enteritidis PT4 (strain P125109)</name>
    <dbReference type="NCBI Taxonomy" id="550537"/>
    <lineage>
        <taxon>Bacteria</taxon>
        <taxon>Pseudomonadati</taxon>
        <taxon>Pseudomonadota</taxon>
        <taxon>Gammaproteobacteria</taxon>
        <taxon>Enterobacterales</taxon>
        <taxon>Enterobacteriaceae</taxon>
        <taxon>Salmonella</taxon>
    </lineage>
</organism>
<sequence length="129" mass="13811">MSNVPAELKYSKEHEWLRKEADGTYTVGITEHAQELLGDMVFVDLPEVGATVSAGDDCAVAESVKAASDIYAPVSGEIVAVNDALSDSPELVNSEPYAGGWIFKIKASDESELESLLDATAYEALLEDE</sequence>
<gene>
    <name evidence="1" type="primary">gcvH</name>
    <name type="ordered locus">SEN2897</name>
</gene>
<keyword id="KW-0450">Lipoyl</keyword>
<accession>B5QXI1</accession>